<proteinExistence type="inferred from homology"/>
<sequence length="162" mass="17687">MSAPRKVRLPSVKAVDMSMEDMAARLARLESENKALKQQVLRGGACASSTSVPSAPVPPPEPLTARQREVMITQATGRLASQAMKKIEDKVRKSVDGVTTRNEMENILQNLTLRIQVSMLGAKGQPSPGEGTRPRESNDPNATRRARSRSRGREAKKVQISD</sequence>
<gene>
    <name type="ORF">BLRF2</name>
</gene>
<organism>
    <name type="scientific">Epstein-Barr virus (strain B95-8)</name>
    <name type="common">HHV-4</name>
    <name type="synonym">Human herpesvirus 4</name>
    <dbReference type="NCBI Taxonomy" id="10377"/>
    <lineage>
        <taxon>Viruses</taxon>
        <taxon>Duplodnaviria</taxon>
        <taxon>Heunggongvirae</taxon>
        <taxon>Peploviricota</taxon>
        <taxon>Herviviricetes</taxon>
        <taxon>Herpesvirales</taxon>
        <taxon>Orthoherpesviridae</taxon>
        <taxon>Gammaherpesvirinae</taxon>
        <taxon>Lymphocryptovirus</taxon>
        <taxon>Lymphocryptovirus humangamma4</taxon>
        <taxon>Epstein-Barr virus (strain GD1)</taxon>
    </lineage>
</organism>
<protein>
    <recommendedName>
        <fullName>Tegument protein BLRF2</fullName>
    </recommendedName>
</protein>
<feature type="chain" id="PRO_0000116256" description="Tegument protein BLRF2">
    <location>
        <begin position="1"/>
        <end position="162"/>
    </location>
</feature>
<feature type="region of interest" description="Disordered" evidence="4">
    <location>
        <begin position="118"/>
        <end position="162"/>
    </location>
</feature>
<feature type="coiled-coil region" evidence="3">
    <location>
        <begin position="12"/>
        <end position="43"/>
    </location>
</feature>
<feature type="compositionally biased region" description="Basic and acidic residues" evidence="4">
    <location>
        <begin position="151"/>
        <end position="162"/>
    </location>
</feature>
<keyword id="KW-0175">Coiled coil</keyword>
<keyword id="KW-0238">DNA-binding</keyword>
<keyword id="KW-1035">Host cytoplasm</keyword>
<keyword id="KW-0945">Host-virus interaction</keyword>
<keyword id="KW-1090">Inhibition of host innate immune response by virus</keyword>
<keyword id="KW-0426">Late protein</keyword>
<keyword id="KW-1185">Reference proteome</keyword>
<keyword id="KW-0899">Viral immunoevasion</keyword>
<keyword id="KW-0946">Virion</keyword>
<keyword id="KW-0920">Virion tegument</keyword>
<accession>P03197</accession>
<accession>Q777F1</accession>
<evidence type="ECO:0000250" key="1">
    <source>
        <dbReference type="UniProtKB" id="P0C717"/>
    </source>
</evidence>
<evidence type="ECO:0000250" key="2">
    <source>
        <dbReference type="UniProtKB" id="Q2HR80"/>
    </source>
</evidence>
<evidence type="ECO:0000255" key="3"/>
<evidence type="ECO:0000256" key="4">
    <source>
        <dbReference type="SAM" id="MobiDB-lite"/>
    </source>
</evidence>
<evidence type="ECO:0000269" key="5">
    <source>
    </source>
</evidence>
<evidence type="ECO:0000305" key="6"/>
<organismHost>
    <name type="scientific">Homo sapiens</name>
    <name type="common">Human</name>
    <dbReference type="NCBI Taxonomy" id="9606"/>
</organismHost>
<dbReference type="EMBL" id="V01555">
    <property type="protein sequence ID" value="CAA24852.1"/>
    <property type="molecule type" value="Genomic_DNA"/>
</dbReference>
<dbReference type="EMBL" id="AJ507799">
    <property type="protein sequence ID" value="CAD53416.1"/>
    <property type="molecule type" value="Genomic_DNA"/>
</dbReference>
<dbReference type="PIR" id="G43041">
    <property type="entry name" value="QQBE19"/>
</dbReference>
<dbReference type="RefSeq" id="YP_401666.1">
    <property type="nucleotide sequence ID" value="NC_007605.1"/>
</dbReference>
<dbReference type="SMR" id="P03197"/>
<dbReference type="IntAct" id="P03197">
    <property type="interactions" value="2"/>
</dbReference>
<dbReference type="MINT" id="P03197"/>
<dbReference type="DNASU" id="3783717"/>
<dbReference type="GeneID" id="3783717"/>
<dbReference type="KEGG" id="vg:3783717"/>
<dbReference type="Proteomes" id="UP000153037">
    <property type="component" value="Segment"/>
</dbReference>
<dbReference type="GO" id="GO:0030430">
    <property type="term" value="C:host cell cytoplasm"/>
    <property type="evidence" value="ECO:0007669"/>
    <property type="project" value="UniProtKB-SubCell"/>
</dbReference>
<dbReference type="GO" id="GO:0019033">
    <property type="term" value="C:viral tegument"/>
    <property type="evidence" value="ECO:0007669"/>
    <property type="project" value="UniProtKB-SubCell"/>
</dbReference>
<dbReference type="GO" id="GO:0003677">
    <property type="term" value="F:DNA binding"/>
    <property type="evidence" value="ECO:0007669"/>
    <property type="project" value="UniProtKB-KW"/>
</dbReference>
<dbReference type="GO" id="GO:0052170">
    <property type="term" value="P:symbiont-mediated suppression of host innate immune response"/>
    <property type="evidence" value="ECO:0007669"/>
    <property type="project" value="UniProtKB-KW"/>
</dbReference>
<dbReference type="Gene3D" id="1.10.3390.10">
    <property type="entry name" value="YejL-like"/>
    <property type="match status" value="1"/>
</dbReference>
<dbReference type="InterPro" id="IPR008642">
    <property type="entry name" value="Herpes_BLRF2"/>
</dbReference>
<dbReference type="Pfam" id="PF05812">
    <property type="entry name" value="Herpes_BLRF2"/>
    <property type="match status" value="1"/>
</dbReference>
<dbReference type="SUPFAM" id="SSF160459">
    <property type="entry name" value="BLRF2-like"/>
    <property type="match status" value="1"/>
</dbReference>
<reference key="1">
    <citation type="journal article" date="1984" name="Nature">
        <title>DNA sequence and expression of the B95-8 Epstein-Barr virus genome.</title>
        <authorList>
            <person name="Baer R."/>
            <person name="Bankier A.T."/>
            <person name="Biggin M.D."/>
            <person name="Deininger P.L."/>
            <person name="Farrell P.J."/>
            <person name="Gibson T.J."/>
            <person name="Hatfull G."/>
            <person name="Hudson G.S."/>
            <person name="Satchwell S.C."/>
            <person name="Seguin C."/>
            <person name="Tuffnell P.S."/>
            <person name="Barrell B.G."/>
        </authorList>
    </citation>
    <scope>NUCLEOTIDE SEQUENCE [LARGE SCALE GENOMIC DNA]</scope>
</reference>
<reference key="2">
    <citation type="journal article" date="2003" name="Virology">
        <title>Updated Epstein-Barr virus (EBV) DNA sequence and analysis of a promoter for the BART (CST, BARF0) RNAs of EBV.</title>
        <authorList>
            <person name="de Jesus O."/>
            <person name="Smith P.R."/>
            <person name="Spender L.C."/>
            <person name="Elgueta Karstegl C."/>
            <person name="Niller H.H."/>
            <person name="Huang D."/>
            <person name="Farrell P.J."/>
        </authorList>
    </citation>
    <scope>GENOME REANNOTATION</scope>
</reference>
<reference key="3">
    <citation type="journal article" date="2004" name="Proc. Natl. Acad. Sci. U.S.A.">
        <title>Proteins of purified Epstein-Barr virus.</title>
        <authorList>
            <person name="Johannsen E."/>
            <person name="Luftig M."/>
            <person name="Chase M.R."/>
            <person name="Weicksel S."/>
            <person name="Cahir-McFarland E."/>
            <person name="Illanes D."/>
            <person name="Sarracino D."/>
            <person name="Kieff E."/>
        </authorList>
    </citation>
    <scope>SUBCELLULAR LOCATION</scope>
</reference>
<name>BLRF2_EBVB9</name>
<comment type="function">
    <text evidence="2">Plays a role in the inhibition of host innate immune system by targeting the CGAS enzymatic activity which is the principal cytosolic DNA sensor that detects invading viral DNA. Acts by inhibiting CGAS-DNA phase separation: directly binds double-stranded DNA (dsDNA) in a length dependent but sequence independent manner and is able to form DNA-induced phase separation in infected cells. DNA phase separation of ORF52 mediates disruption of liquid-like droplets in which CGAS is activated, thereby preventing CGAS activity.</text>
</comment>
<comment type="subunit">
    <text evidence="2">Homooligomer; homooligomerizes and binds double-stranded DNA (dsDNA) cooperatively (By similarity). Interacts with host CGAS (By similarity).</text>
</comment>
<comment type="subcellular location">
    <subcellularLocation>
        <location evidence="5">Virion tegument</location>
    </subcellularLocation>
    <subcellularLocation>
        <location evidence="1">Host cytoplasm</location>
    </subcellularLocation>
</comment>
<comment type="similarity">
    <text evidence="6">Belongs to the herpesviridae BLRF2 family.</text>
</comment>